<organism>
    <name type="scientific">Schizosaccharomyces japonicus (strain yFS275 / FY16936)</name>
    <name type="common">Fission yeast</name>
    <dbReference type="NCBI Taxonomy" id="402676"/>
    <lineage>
        <taxon>Eukaryota</taxon>
        <taxon>Fungi</taxon>
        <taxon>Dikarya</taxon>
        <taxon>Ascomycota</taxon>
        <taxon>Taphrinomycotina</taxon>
        <taxon>Schizosaccharomycetes</taxon>
        <taxon>Schizosaccharomycetales</taxon>
        <taxon>Schizosaccharomycetaceae</taxon>
        <taxon>Schizosaccharomyces</taxon>
    </lineage>
</organism>
<dbReference type="EC" id="4.2.3.4" evidence="1"/>
<dbReference type="EC" id="2.5.1.19" evidence="1"/>
<dbReference type="EC" id="2.7.1.71" evidence="1"/>
<dbReference type="EC" id="4.2.1.10" evidence="1"/>
<dbReference type="EC" id="1.1.1.25" evidence="1"/>
<dbReference type="EMBL" id="KE651166">
    <property type="protein sequence ID" value="EEB05331.1"/>
    <property type="molecule type" value="Genomic_DNA"/>
</dbReference>
<dbReference type="RefSeq" id="XP_002171624.1">
    <property type="nucleotide sequence ID" value="XM_002171588.2"/>
</dbReference>
<dbReference type="SMR" id="B6JVD0"/>
<dbReference type="STRING" id="402676.B6JVD0"/>
<dbReference type="EnsemblFungi" id="EEB05331">
    <property type="protein sequence ID" value="EEB05331"/>
    <property type="gene ID" value="SJAG_00337"/>
</dbReference>
<dbReference type="GeneID" id="7049649"/>
<dbReference type="JaponicusDB" id="SJAG_00337">
    <property type="gene designation" value="aro1"/>
</dbReference>
<dbReference type="VEuPathDB" id="FungiDB:SJAG_00337"/>
<dbReference type="eggNOG" id="KOG0692">
    <property type="taxonomic scope" value="Eukaryota"/>
</dbReference>
<dbReference type="HOGENOM" id="CLU_001201_1_2_1"/>
<dbReference type="OMA" id="SWANMSW"/>
<dbReference type="OrthoDB" id="197068at2759"/>
<dbReference type="UniPathway" id="UPA00053">
    <property type="reaction ID" value="UER00085"/>
</dbReference>
<dbReference type="UniPathway" id="UPA00053">
    <property type="reaction ID" value="UER00086"/>
</dbReference>
<dbReference type="UniPathway" id="UPA00053">
    <property type="reaction ID" value="UER00087"/>
</dbReference>
<dbReference type="UniPathway" id="UPA00053">
    <property type="reaction ID" value="UER00088"/>
</dbReference>
<dbReference type="UniPathway" id="UPA00053">
    <property type="reaction ID" value="UER00089"/>
</dbReference>
<dbReference type="Proteomes" id="UP000001744">
    <property type="component" value="Unassembled WGS sequence"/>
</dbReference>
<dbReference type="GO" id="GO:0005737">
    <property type="term" value="C:cytoplasm"/>
    <property type="evidence" value="ECO:0007669"/>
    <property type="project" value="UniProtKB-SubCell"/>
</dbReference>
<dbReference type="GO" id="GO:0003855">
    <property type="term" value="F:3-dehydroquinate dehydratase activity"/>
    <property type="evidence" value="ECO:0007669"/>
    <property type="project" value="UniProtKB-UniRule"/>
</dbReference>
<dbReference type="GO" id="GO:0003856">
    <property type="term" value="F:3-dehydroquinate synthase activity"/>
    <property type="evidence" value="ECO:0007669"/>
    <property type="project" value="UniProtKB-UniRule"/>
</dbReference>
<dbReference type="GO" id="GO:0003866">
    <property type="term" value="F:3-phosphoshikimate 1-carboxyvinyltransferase activity"/>
    <property type="evidence" value="ECO:0000318"/>
    <property type="project" value="GO_Central"/>
</dbReference>
<dbReference type="GO" id="GO:0005524">
    <property type="term" value="F:ATP binding"/>
    <property type="evidence" value="ECO:0007669"/>
    <property type="project" value="UniProtKB-UniRule"/>
</dbReference>
<dbReference type="GO" id="GO:0046872">
    <property type="term" value="F:metal ion binding"/>
    <property type="evidence" value="ECO:0007669"/>
    <property type="project" value="UniProtKB-UniRule"/>
</dbReference>
<dbReference type="GO" id="GO:0004764">
    <property type="term" value="F:shikimate 3-dehydrogenase (NADP+) activity"/>
    <property type="evidence" value="ECO:0007669"/>
    <property type="project" value="UniProtKB-UniRule"/>
</dbReference>
<dbReference type="GO" id="GO:0004765">
    <property type="term" value="F:shikimate kinase activity"/>
    <property type="evidence" value="ECO:0007669"/>
    <property type="project" value="UniProtKB-UniRule"/>
</dbReference>
<dbReference type="GO" id="GO:0008652">
    <property type="term" value="P:amino acid biosynthetic process"/>
    <property type="evidence" value="ECO:0007669"/>
    <property type="project" value="UniProtKB-KW"/>
</dbReference>
<dbReference type="GO" id="GO:0009073">
    <property type="term" value="P:aromatic amino acid family biosynthetic process"/>
    <property type="evidence" value="ECO:0007669"/>
    <property type="project" value="UniProtKB-UniRule"/>
</dbReference>
<dbReference type="GO" id="GO:0009423">
    <property type="term" value="P:chorismate biosynthetic process"/>
    <property type="evidence" value="ECO:0000318"/>
    <property type="project" value="GO_Central"/>
</dbReference>
<dbReference type="CDD" id="cd00502">
    <property type="entry name" value="DHQase_I"/>
    <property type="match status" value="1"/>
</dbReference>
<dbReference type="CDD" id="cd08195">
    <property type="entry name" value="DHQS"/>
    <property type="match status" value="1"/>
</dbReference>
<dbReference type="CDD" id="cd01556">
    <property type="entry name" value="EPSP_synthase"/>
    <property type="match status" value="1"/>
</dbReference>
<dbReference type="CDD" id="cd01065">
    <property type="entry name" value="NAD_bind_Shikimate_DH"/>
    <property type="match status" value="1"/>
</dbReference>
<dbReference type="CDD" id="cd00464">
    <property type="entry name" value="SK"/>
    <property type="match status" value="1"/>
</dbReference>
<dbReference type="FunFam" id="1.20.1090.10:FF:000007">
    <property type="entry name" value="Pentafunctional AROM polypeptide"/>
    <property type="match status" value="1"/>
</dbReference>
<dbReference type="FunFam" id="3.20.20.70:FF:000135">
    <property type="entry name" value="Pentafunctional AROM polypeptide"/>
    <property type="match status" value="1"/>
</dbReference>
<dbReference type="FunFam" id="3.40.50.10860:FF:000015">
    <property type="entry name" value="Pentafunctional AROM polypeptide"/>
    <property type="match status" value="1"/>
</dbReference>
<dbReference type="FunFam" id="3.40.50.1970:FF:000007">
    <property type="entry name" value="Pentafunctional AROM polypeptide"/>
    <property type="match status" value="1"/>
</dbReference>
<dbReference type="FunFam" id="3.40.50.300:FF:001256">
    <property type="entry name" value="Pentafunctional AROM polypeptide"/>
    <property type="match status" value="1"/>
</dbReference>
<dbReference type="FunFam" id="3.65.10.10:FF:000007">
    <property type="entry name" value="Pentafunctional AROM polypeptide"/>
    <property type="match status" value="1"/>
</dbReference>
<dbReference type="FunFam" id="3.65.10.10:FF:000008">
    <property type="entry name" value="Pentafunctional AROM polypeptide"/>
    <property type="match status" value="1"/>
</dbReference>
<dbReference type="Gene3D" id="3.40.50.1970">
    <property type="match status" value="1"/>
</dbReference>
<dbReference type="Gene3D" id="3.20.20.70">
    <property type="entry name" value="Aldolase class I"/>
    <property type="match status" value="1"/>
</dbReference>
<dbReference type="Gene3D" id="1.20.1090.10">
    <property type="entry name" value="Dehydroquinate synthase-like - alpha domain"/>
    <property type="match status" value="1"/>
</dbReference>
<dbReference type="Gene3D" id="3.65.10.10">
    <property type="entry name" value="Enolpyruvate transferase domain"/>
    <property type="match status" value="2"/>
</dbReference>
<dbReference type="Gene3D" id="3.40.50.10860">
    <property type="entry name" value="Leucine Dehydrogenase, chain A, domain 1"/>
    <property type="match status" value="1"/>
</dbReference>
<dbReference type="Gene3D" id="3.40.50.720">
    <property type="entry name" value="NAD(P)-binding Rossmann-like Domain"/>
    <property type="match status" value="1"/>
</dbReference>
<dbReference type="Gene3D" id="3.40.50.300">
    <property type="entry name" value="P-loop containing nucleotide triphosphate hydrolases"/>
    <property type="match status" value="1"/>
</dbReference>
<dbReference type="HAMAP" id="MF_00210">
    <property type="entry name" value="EPSP_synth"/>
    <property type="match status" value="1"/>
</dbReference>
<dbReference type="HAMAP" id="MF_03143">
    <property type="entry name" value="Pentafunct_AroM"/>
    <property type="match status" value="1"/>
</dbReference>
<dbReference type="HAMAP" id="MF_00222">
    <property type="entry name" value="Shikimate_DH_AroE"/>
    <property type="match status" value="1"/>
</dbReference>
<dbReference type="HAMAP" id="MF_00109">
    <property type="entry name" value="Shikimate_kinase"/>
    <property type="match status" value="1"/>
</dbReference>
<dbReference type="InterPro" id="IPR013785">
    <property type="entry name" value="Aldolase_TIM"/>
</dbReference>
<dbReference type="InterPro" id="IPR046346">
    <property type="entry name" value="Aminoacid_DH-like_N_sf"/>
</dbReference>
<dbReference type="InterPro" id="IPR016037">
    <property type="entry name" value="DHQ_synth_AroB"/>
</dbReference>
<dbReference type="InterPro" id="IPR030960">
    <property type="entry name" value="DHQS/DOIS_N"/>
</dbReference>
<dbReference type="InterPro" id="IPR056179">
    <property type="entry name" value="DHQS_C"/>
</dbReference>
<dbReference type="InterPro" id="IPR001381">
    <property type="entry name" value="DHquinase_I"/>
</dbReference>
<dbReference type="InterPro" id="IPR001986">
    <property type="entry name" value="Enolpyruvate_Tfrase_dom"/>
</dbReference>
<dbReference type="InterPro" id="IPR036968">
    <property type="entry name" value="Enolpyruvate_Tfrase_sf"/>
</dbReference>
<dbReference type="InterPro" id="IPR006264">
    <property type="entry name" value="EPSP_synthase"/>
</dbReference>
<dbReference type="InterPro" id="IPR023193">
    <property type="entry name" value="EPSP_synthase_CS"/>
</dbReference>
<dbReference type="InterPro" id="IPR036291">
    <property type="entry name" value="NAD(P)-bd_dom_sf"/>
</dbReference>
<dbReference type="InterPro" id="IPR027417">
    <property type="entry name" value="P-loop_NTPase"/>
</dbReference>
<dbReference type="InterPro" id="IPR008289">
    <property type="entry name" value="Pentafunct_AroM"/>
</dbReference>
<dbReference type="InterPro" id="IPR013792">
    <property type="entry name" value="RNA3'P_cycl/enolpyr_Trfase_a/b"/>
</dbReference>
<dbReference type="InterPro" id="IPR041121">
    <property type="entry name" value="SDH_C"/>
</dbReference>
<dbReference type="InterPro" id="IPR031322">
    <property type="entry name" value="Shikimate/glucono_kinase"/>
</dbReference>
<dbReference type="InterPro" id="IPR013708">
    <property type="entry name" value="Shikimate_DH-bd_N"/>
</dbReference>
<dbReference type="InterPro" id="IPR010110">
    <property type="entry name" value="Shikimate_DH_AroM-type"/>
</dbReference>
<dbReference type="InterPro" id="IPR022893">
    <property type="entry name" value="Shikimate_DH_fam"/>
</dbReference>
<dbReference type="InterPro" id="IPR000623">
    <property type="entry name" value="Shikimate_kinase/TSH1"/>
</dbReference>
<dbReference type="InterPro" id="IPR006151">
    <property type="entry name" value="Shikm_DH/Glu-tRNA_Rdtase"/>
</dbReference>
<dbReference type="NCBIfam" id="TIGR01356">
    <property type="entry name" value="aroA"/>
    <property type="match status" value="1"/>
</dbReference>
<dbReference type="NCBIfam" id="TIGR01357">
    <property type="entry name" value="aroB"/>
    <property type="match status" value="1"/>
</dbReference>
<dbReference type="NCBIfam" id="TIGR01093">
    <property type="entry name" value="aroD"/>
    <property type="match status" value="1"/>
</dbReference>
<dbReference type="NCBIfam" id="TIGR01809">
    <property type="entry name" value="Shik-DH-AROM"/>
    <property type="match status" value="1"/>
</dbReference>
<dbReference type="PANTHER" id="PTHR21090">
    <property type="entry name" value="AROM/DEHYDROQUINATE SYNTHASE"/>
    <property type="match status" value="1"/>
</dbReference>
<dbReference type="PANTHER" id="PTHR21090:SF5">
    <property type="entry name" value="PENTAFUNCTIONAL AROM POLYPEPTIDE"/>
    <property type="match status" value="1"/>
</dbReference>
<dbReference type="Pfam" id="PF01761">
    <property type="entry name" value="DHQ_synthase"/>
    <property type="match status" value="1"/>
</dbReference>
<dbReference type="Pfam" id="PF24621">
    <property type="entry name" value="DHQS_C"/>
    <property type="match status" value="1"/>
</dbReference>
<dbReference type="Pfam" id="PF01487">
    <property type="entry name" value="DHquinase_I"/>
    <property type="match status" value="1"/>
</dbReference>
<dbReference type="Pfam" id="PF00275">
    <property type="entry name" value="EPSP_synthase"/>
    <property type="match status" value="1"/>
</dbReference>
<dbReference type="Pfam" id="PF18317">
    <property type="entry name" value="SDH_C"/>
    <property type="match status" value="1"/>
</dbReference>
<dbReference type="Pfam" id="PF01488">
    <property type="entry name" value="Shikimate_DH"/>
    <property type="match status" value="1"/>
</dbReference>
<dbReference type="Pfam" id="PF08501">
    <property type="entry name" value="Shikimate_dh_N"/>
    <property type="match status" value="1"/>
</dbReference>
<dbReference type="Pfam" id="PF01202">
    <property type="entry name" value="SKI"/>
    <property type="match status" value="1"/>
</dbReference>
<dbReference type="PIRSF" id="PIRSF000514">
    <property type="entry name" value="Pentafunct_AroM"/>
    <property type="match status" value="1"/>
</dbReference>
<dbReference type="PRINTS" id="PR01100">
    <property type="entry name" value="SHIKIMTKNASE"/>
</dbReference>
<dbReference type="SUPFAM" id="SSF51569">
    <property type="entry name" value="Aldolase"/>
    <property type="match status" value="1"/>
</dbReference>
<dbReference type="SUPFAM" id="SSF53223">
    <property type="entry name" value="Aminoacid dehydrogenase-like, N-terminal domain"/>
    <property type="match status" value="1"/>
</dbReference>
<dbReference type="SUPFAM" id="SSF56796">
    <property type="entry name" value="Dehydroquinate synthase-like"/>
    <property type="match status" value="1"/>
</dbReference>
<dbReference type="SUPFAM" id="SSF55205">
    <property type="entry name" value="EPT/RTPC-like"/>
    <property type="match status" value="1"/>
</dbReference>
<dbReference type="SUPFAM" id="SSF51735">
    <property type="entry name" value="NAD(P)-binding Rossmann-fold domains"/>
    <property type="match status" value="1"/>
</dbReference>
<dbReference type="SUPFAM" id="SSF52540">
    <property type="entry name" value="P-loop containing nucleoside triphosphate hydrolases"/>
    <property type="match status" value="1"/>
</dbReference>
<dbReference type="PROSITE" id="PS00885">
    <property type="entry name" value="EPSP_SYNTHASE_2"/>
    <property type="match status" value="1"/>
</dbReference>
<protein>
    <recommendedName>
        <fullName evidence="1">Pentafunctional AROM polypeptide</fullName>
    </recommendedName>
    <domain>
        <recommendedName>
            <fullName evidence="1">3-dehydroquinate synthase</fullName>
            <shortName evidence="1">DHQS</shortName>
            <ecNumber evidence="1">4.2.3.4</ecNumber>
        </recommendedName>
    </domain>
    <domain>
        <recommendedName>
            <fullName evidence="1">3-phosphoshikimate 1-carboxyvinyltransferase</fullName>
            <ecNumber evidence="1">2.5.1.19</ecNumber>
        </recommendedName>
        <alternativeName>
            <fullName evidence="1">5-enolpyruvylshikimate-3-phosphate synthase</fullName>
            <shortName evidence="1">EPSP synthase</shortName>
            <shortName evidence="1">EPSPS</shortName>
        </alternativeName>
    </domain>
    <domain>
        <recommendedName>
            <fullName evidence="1">Shikimate kinase</fullName>
            <shortName evidence="1">SK</shortName>
            <ecNumber evidence="1">2.7.1.71</ecNumber>
        </recommendedName>
    </domain>
    <domain>
        <recommendedName>
            <fullName evidence="1">3-dehydroquinate dehydratase</fullName>
            <shortName evidence="1">3-dehydroquinase</shortName>
            <ecNumber evidence="1">4.2.1.10</ecNumber>
        </recommendedName>
    </domain>
    <domain>
        <recommendedName>
            <fullName evidence="1">Shikimate dehydrogenase</fullName>
            <ecNumber evidence="1">1.1.1.25</ecNumber>
        </recommendedName>
    </domain>
</protein>
<accession>B6JVD0</accession>
<sequence length="1584" mass="174104">MSQDTDVVSVPILGKEAVFVGFNLERRVCDFLIENAKSSAYVIVTDTNIAPHYLEKYTTALSEAAKRHGVAPRILTRVIPPGETSKCRSMKAEIEDWMLSQSCTRDTVLVAMGGGVIGDMAGYVAATFMRGIRFIQLPTTLLAMVDSSIGGKTAIDTPNGKNLVGAFWQPLAVFADLNFLETLEPRQFINGMGEVIKTAAMWNEKDFCLLEQNPTVILEAVHRPRVPGQFKFENIRNLLQKIILASVRTKCEVVTLDEREGGLRNLLNFGHSIGHAYEAILFPQILHGECVSIGMVKELELSRYLGILKPNAVGRVTKCLMSYTLPVSVHDAHIKKYAGYKKCPVDKLIRIMAVDKKNQGLQKRVVILKAVGETYEKHATVVSDEDIRVVLSHDIQVSPFDNSVSDVVVTPPGSKSISNRALILAAMAKGTTKLTNMLHSDDTQVMMAALEELGAATFSWEDNGETLVVNGGGKFKTPSKELYLSNAGTAARFLTTVAALVGENEQGGEVVLTGNHRMKVRPIGPLVDALRANGCSISYLEREGSLPLKMIPQNGLRGGVIELAATVSSQYVSSILMCAPYAQEPVTLKLVGGKPISQLYVDMTIAMMKGFGVNVVKSETEAYTYHIPKANYTSPGDYEIESDASSATYPLAFAAITGTKCTVPNIGSASLQGDARFARDVLAPMGCTVEQTPTSTTVQGPPMGQLKPLESVDMETMTDAFLTATALAAVACNSSGNEHITRITGIANQRVKECNRIAAMVHELAKFGVKAGELEDGIFIHGQSYKDLKTPEEGIYTYDDHRVAMAFSILTLVTPKPTVILDKACVVKTWPYWWDVLRNSFKIKLAGVESKETVKSVKLTRSRASVILIGMRGAGKTTIGSIIAGQLNMKFLDLDQELEKKLNTTIPDLVNTRGWDDFRQEELQVLQEFIDTKSSDFVAACGGGIVETPAARELLCKYVKEGGIVLHIHRNLDQVLSYLSIDKSRPAYADRESTKNVYLRRHQWYLDCRSHDFVSPTIESGNVQSKLETSMSRFLRVVTGKSTWFEKAIQKPHSFFLSLTFPNINDAISFLPEAIIGCDAVELRADLLEDPNSTTGYPSVEFVAEQFATLRAAIDLPIIFTVRSKDQGGRFPNANESEAVELMLAALRWGVDVLDLELGWSTESLQAIYARKENTKIITSWHDTAQRCSWAQPDEWLQKLDMATAFGDVVKFVGIAKSMQDNFDLEKFRKSFKGYTNKPLIAINMGTVGQLSRVFNNVLTPVTSPALPYKAAPGQLSVRQIITALSLMGSISPKKFYLFGTPIQHSKSPILHKTCYDLTGLPYTYDLFETESVEGVKDVLSQPDFGGANVTIPYKLDILQYLDELSDEARFLGAVNTVVPISENGKRKLRGDNTDWRGIVRTFVRAGANNLNGKNALVIGAGGTSRAAIFAMHKLGAKNIYLLNRTLVNAEKVKAVFPEEYNVKVIDHTKQSEISEWTKLQVAAVVSTVPADRPLPESVSKVIDALLSEIPAQKKEQYVFLDMAYKPLNTPLMSVASKHGYTCINGLEVLLQQGLASFEIWTGLAVPFEHVFGLYMVLCAKEHN</sequence>
<name>ARO1_SCHJY</name>
<feature type="chain" id="PRO_0000406738" description="Pentafunctional AROM polypeptide">
    <location>
        <begin position="1"/>
        <end position="1584"/>
    </location>
</feature>
<feature type="region of interest" description="3-dehydroquinate synthase">
    <location>
        <begin position="1"/>
        <end position="384"/>
    </location>
</feature>
<feature type="region of interest" description="EPSP synthase">
    <location>
        <begin position="397"/>
        <end position="843"/>
    </location>
</feature>
<feature type="region of interest" description="Shikimate kinase">
    <location>
        <begin position="863"/>
        <end position="1058"/>
    </location>
</feature>
<feature type="region of interest" description="3-dehydroquinase">
    <location>
        <begin position="1059"/>
        <end position="1280"/>
    </location>
</feature>
<feature type="region of interest" description="Shikimate dehydrogenase">
    <location>
        <begin position="1293"/>
        <end position="1584"/>
    </location>
</feature>
<feature type="active site" description="Proton acceptor; for 3-dehydroquinate synthase activity" evidence="1">
    <location>
        <position position="260"/>
    </location>
</feature>
<feature type="active site" description="Proton acceptor; for 3-dehydroquinate synthase activity" evidence="1">
    <location>
        <position position="275"/>
    </location>
</feature>
<feature type="active site" description="For EPSP synthase activity" evidence="1">
    <location>
        <position position="825"/>
    </location>
</feature>
<feature type="active site" description="Proton acceptor; for 3-dehydroquinate dehydratase activity" evidence="1">
    <location>
        <position position="1182"/>
    </location>
</feature>
<feature type="active site" description="Schiff-base intermediate with substrate; for 3-dehydroquinate dehydratase activity" evidence="1">
    <location>
        <position position="1211"/>
    </location>
</feature>
<feature type="binding site" evidence="1">
    <location>
        <begin position="46"/>
        <end position="48"/>
    </location>
    <ligand>
        <name>NAD(+)</name>
        <dbReference type="ChEBI" id="CHEBI:57540"/>
    </ligand>
</feature>
<feature type="binding site" evidence="1">
    <location>
        <begin position="83"/>
        <end position="86"/>
    </location>
    <ligand>
        <name>NAD(+)</name>
        <dbReference type="ChEBI" id="CHEBI:57540"/>
    </ligand>
</feature>
<feature type="binding site" evidence="1">
    <location>
        <begin position="114"/>
        <end position="116"/>
    </location>
    <ligand>
        <name>NAD(+)</name>
        <dbReference type="ChEBI" id="CHEBI:57540"/>
    </ligand>
</feature>
<feature type="binding site" evidence="1">
    <location>
        <position position="119"/>
    </location>
    <ligand>
        <name>NAD(+)</name>
        <dbReference type="ChEBI" id="CHEBI:57540"/>
    </ligand>
</feature>
<feature type="binding site" evidence="1">
    <location>
        <position position="130"/>
    </location>
    <ligand>
        <name>7-phospho-2-dehydro-3-deoxy-D-arabino-heptonate</name>
        <dbReference type="ChEBI" id="CHEBI:58394"/>
    </ligand>
</feature>
<feature type="binding site" evidence="1">
    <location>
        <begin position="139"/>
        <end position="140"/>
    </location>
    <ligand>
        <name>NAD(+)</name>
        <dbReference type="ChEBI" id="CHEBI:57540"/>
    </ligand>
</feature>
<feature type="binding site" evidence="1">
    <location>
        <position position="146"/>
    </location>
    <ligand>
        <name>7-phospho-2-dehydro-3-deoxy-D-arabino-heptonate</name>
        <dbReference type="ChEBI" id="CHEBI:58394"/>
    </ligand>
</feature>
<feature type="binding site" evidence="1">
    <location>
        <position position="152"/>
    </location>
    <ligand>
        <name>7-phospho-2-dehydro-3-deoxy-D-arabino-heptonate</name>
        <dbReference type="ChEBI" id="CHEBI:58394"/>
    </ligand>
</feature>
<feature type="binding site" evidence="1">
    <location>
        <position position="161"/>
    </location>
    <ligand>
        <name>NAD(+)</name>
        <dbReference type="ChEBI" id="CHEBI:57540"/>
    </ligand>
</feature>
<feature type="binding site" evidence="1">
    <location>
        <position position="162"/>
    </location>
    <ligand>
        <name>7-phospho-2-dehydro-3-deoxy-D-arabino-heptonate</name>
        <dbReference type="ChEBI" id="CHEBI:58394"/>
    </ligand>
</feature>
<feature type="binding site" evidence="1">
    <location>
        <begin position="179"/>
        <end position="182"/>
    </location>
    <ligand>
        <name>NAD(+)</name>
        <dbReference type="ChEBI" id="CHEBI:57540"/>
    </ligand>
</feature>
<feature type="binding site" evidence="1">
    <location>
        <position position="190"/>
    </location>
    <ligand>
        <name>NAD(+)</name>
        <dbReference type="ChEBI" id="CHEBI:57540"/>
    </ligand>
</feature>
<feature type="binding site" evidence="1">
    <location>
        <begin position="194"/>
        <end position="197"/>
    </location>
    <ligand>
        <name>7-phospho-2-dehydro-3-deoxy-D-arabino-heptonate</name>
        <dbReference type="ChEBI" id="CHEBI:58394"/>
    </ligand>
</feature>
<feature type="binding site" evidence="1">
    <location>
        <position position="194"/>
    </location>
    <ligand>
        <name>Zn(2+)</name>
        <dbReference type="ChEBI" id="CHEBI:29105"/>
        <note>catalytic</note>
    </ligand>
</feature>
<feature type="binding site" evidence="1">
    <location>
        <position position="250"/>
    </location>
    <ligand>
        <name>7-phospho-2-dehydro-3-deoxy-D-arabino-heptonate</name>
        <dbReference type="ChEBI" id="CHEBI:58394"/>
    </ligand>
</feature>
<feature type="binding site" evidence="1">
    <location>
        <begin position="264"/>
        <end position="268"/>
    </location>
    <ligand>
        <name>7-phospho-2-dehydro-3-deoxy-D-arabino-heptonate</name>
        <dbReference type="ChEBI" id="CHEBI:58394"/>
    </ligand>
</feature>
<feature type="binding site" evidence="1">
    <location>
        <position position="271"/>
    </location>
    <ligand>
        <name>7-phospho-2-dehydro-3-deoxy-D-arabino-heptonate</name>
        <dbReference type="ChEBI" id="CHEBI:58394"/>
    </ligand>
</feature>
<feature type="binding site" evidence="1">
    <location>
        <position position="271"/>
    </location>
    <ligand>
        <name>Zn(2+)</name>
        <dbReference type="ChEBI" id="CHEBI:29105"/>
        <note>catalytic</note>
    </ligand>
</feature>
<feature type="binding site" evidence="1">
    <location>
        <position position="287"/>
    </location>
    <ligand>
        <name>7-phospho-2-dehydro-3-deoxy-D-arabino-heptonate</name>
        <dbReference type="ChEBI" id="CHEBI:58394"/>
    </ligand>
</feature>
<feature type="binding site" evidence="1">
    <location>
        <position position="287"/>
    </location>
    <ligand>
        <name>Zn(2+)</name>
        <dbReference type="ChEBI" id="CHEBI:29105"/>
        <note>catalytic</note>
    </ligand>
</feature>
<feature type="binding site" evidence="1">
    <location>
        <position position="356"/>
    </location>
    <ligand>
        <name>7-phospho-2-dehydro-3-deoxy-D-arabino-heptonate</name>
        <dbReference type="ChEBI" id="CHEBI:58394"/>
    </ligand>
</feature>
<feature type="binding site" evidence="1">
    <location>
        <begin position="870"/>
        <end position="877"/>
    </location>
    <ligand>
        <name>ATP</name>
        <dbReference type="ChEBI" id="CHEBI:30616"/>
    </ligand>
</feature>
<gene>
    <name evidence="1" type="primary">aro1</name>
    <name type="ORF">SJAG_00337</name>
</gene>
<proteinExistence type="inferred from homology"/>
<comment type="function">
    <text evidence="1">The AROM polypeptide catalyzes 5 consecutive enzymatic reactions in prechorismate polyaromatic amino acid biosynthesis.</text>
</comment>
<comment type="catalytic activity">
    <reaction evidence="1">
        <text>7-phospho-2-dehydro-3-deoxy-D-arabino-heptonate = 3-dehydroquinate + phosphate</text>
        <dbReference type="Rhea" id="RHEA:21968"/>
        <dbReference type="ChEBI" id="CHEBI:32364"/>
        <dbReference type="ChEBI" id="CHEBI:43474"/>
        <dbReference type="ChEBI" id="CHEBI:58394"/>
        <dbReference type="EC" id="4.2.3.4"/>
    </reaction>
</comment>
<comment type="catalytic activity">
    <reaction evidence="1">
        <text>3-dehydroquinate = 3-dehydroshikimate + H2O</text>
        <dbReference type="Rhea" id="RHEA:21096"/>
        <dbReference type="ChEBI" id="CHEBI:15377"/>
        <dbReference type="ChEBI" id="CHEBI:16630"/>
        <dbReference type="ChEBI" id="CHEBI:32364"/>
        <dbReference type="EC" id="4.2.1.10"/>
    </reaction>
</comment>
<comment type="catalytic activity">
    <reaction evidence="1">
        <text>shikimate + NADP(+) = 3-dehydroshikimate + NADPH + H(+)</text>
        <dbReference type="Rhea" id="RHEA:17737"/>
        <dbReference type="ChEBI" id="CHEBI:15378"/>
        <dbReference type="ChEBI" id="CHEBI:16630"/>
        <dbReference type="ChEBI" id="CHEBI:36208"/>
        <dbReference type="ChEBI" id="CHEBI:57783"/>
        <dbReference type="ChEBI" id="CHEBI:58349"/>
        <dbReference type="EC" id="1.1.1.25"/>
    </reaction>
</comment>
<comment type="catalytic activity">
    <reaction evidence="1">
        <text>shikimate + ATP = 3-phosphoshikimate + ADP + H(+)</text>
        <dbReference type="Rhea" id="RHEA:13121"/>
        <dbReference type="ChEBI" id="CHEBI:15378"/>
        <dbReference type="ChEBI" id="CHEBI:30616"/>
        <dbReference type="ChEBI" id="CHEBI:36208"/>
        <dbReference type="ChEBI" id="CHEBI:145989"/>
        <dbReference type="ChEBI" id="CHEBI:456216"/>
        <dbReference type="EC" id="2.7.1.71"/>
    </reaction>
</comment>
<comment type="catalytic activity">
    <reaction evidence="1">
        <text>3-phosphoshikimate + phosphoenolpyruvate = 5-O-(1-carboxyvinyl)-3-phosphoshikimate + phosphate</text>
        <dbReference type="Rhea" id="RHEA:21256"/>
        <dbReference type="ChEBI" id="CHEBI:43474"/>
        <dbReference type="ChEBI" id="CHEBI:57701"/>
        <dbReference type="ChEBI" id="CHEBI:58702"/>
        <dbReference type="ChEBI" id="CHEBI:145989"/>
        <dbReference type="EC" id="2.5.1.19"/>
    </reaction>
</comment>
<comment type="cofactor">
    <cofactor>
        <name>Zn(2+)</name>
        <dbReference type="ChEBI" id="CHEBI:29105"/>
    </cofactor>
    <text>Binds 2 Zn(2+) ions per subunit.</text>
</comment>
<comment type="pathway">
    <text evidence="1">Metabolic intermediate biosynthesis; chorismate biosynthesis; chorismate from D-erythrose 4-phosphate and phosphoenolpyruvate: step 2/7.</text>
</comment>
<comment type="pathway">
    <text evidence="1">Metabolic intermediate biosynthesis; chorismate biosynthesis; chorismate from D-erythrose 4-phosphate and phosphoenolpyruvate: step 3/7.</text>
</comment>
<comment type="pathway">
    <text evidence="1">Metabolic intermediate biosynthesis; chorismate biosynthesis; chorismate from D-erythrose 4-phosphate and phosphoenolpyruvate: step 4/7.</text>
</comment>
<comment type="pathway">
    <text evidence="1">Metabolic intermediate biosynthesis; chorismate biosynthesis; chorismate from D-erythrose 4-phosphate and phosphoenolpyruvate: step 5/7.</text>
</comment>
<comment type="pathway">
    <text evidence="1">Metabolic intermediate biosynthesis; chorismate biosynthesis; chorismate from D-erythrose 4-phosphate and phosphoenolpyruvate: step 6/7.</text>
</comment>
<comment type="subunit">
    <text evidence="1">Homodimer.</text>
</comment>
<comment type="subcellular location">
    <subcellularLocation>
        <location evidence="1">Cytoplasm</location>
    </subcellularLocation>
</comment>
<comment type="similarity">
    <text evidence="1">In the N-terminal section; belongs to the sugar phosphate cyclases superfamily. Dehydroquinate synthase family.</text>
</comment>
<comment type="similarity">
    <text evidence="1">In the 2nd section; belongs to the EPSP synthase family.</text>
</comment>
<comment type="similarity">
    <text evidence="1">In the 3rd section; belongs to the shikimate kinase family.</text>
</comment>
<comment type="similarity">
    <text evidence="1">In the 4th section; belongs to the type-I 3-dehydroquinase family.</text>
</comment>
<comment type="similarity">
    <text evidence="1">In the C-terminal section; belongs to the shikimate dehydrogenase family.</text>
</comment>
<keyword id="KW-0028">Amino-acid biosynthesis</keyword>
<keyword id="KW-0057">Aromatic amino acid biosynthesis</keyword>
<keyword id="KW-0067">ATP-binding</keyword>
<keyword id="KW-0963">Cytoplasm</keyword>
<keyword id="KW-0418">Kinase</keyword>
<keyword id="KW-0456">Lyase</keyword>
<keyword id="KW-0479">Metal-binding</keyword>
<keyword id="KW-0511">Multifunctional enzyme</keyword>
<keyword id="KW-0521">NADP</keyword>
<keyword id="KW-0547">Nucleotide-binding</keyword>
<keyword id="KW-0560">Oxidoreductase</keyword>
<keyword id="KW-1185">Reference proteome</keyword>
<keyword id="KW-0808">Transferase</keyword>
<keyword id="KW-0862">Zinc</keyword>
<reference key="1">
    <citation type="journal article" date="2011" name="Science">
        <title>Comparative functional genomics of the fission yeasts.</title>
        <authorList>
            <person name="Rhind N."/>
            <person name="Chen Z."/>
            <person name="Yassour M."/>
            <person name="Thompson D.A."/>
            <person name="Haas B.J."/>
            <person name="Habib N."/>
            <person name="Wapinski I."/>
            <person name="Roy S."/>
            <person name="Lin M.F."/>
            <person name="Heiman D.I."/>
            <person name="Young S.K."/>
            <person name="Furuya K."/>
            <person name="Guo Y."/>
            <person name="Pidoux A."/>
            <person name="Chen H.M."/>
            <person name="Robbertse B."/>
            <person name="Goldberg J.M."/>
            <person name="Aoki K."/>
            <person name="Bayne E.H."/>
            <person name="Berlin A.M."/>
            <person name="Desjardins C.A."/>
            <person name="Dobbs E."/>
            <person name="Dukaj L."/>
            <person name="Fan L."/>
            <person name="FitzGerald M.G."/>
            <person name="French C."/>
            <person name="Gujja S."/>
            <person name="Hansen K."/>
            <person name="Keifenheim D."/>
            <person name="Levin J.Z."/>
            <person name="Mosher R.A."/>
            <person name="Mueller C.A."/>
            <person name="Pfiffner J."/>
            <person name="Priest M."/>
            <person name="Russ C."/>
            <person name="Smialowska A."/>
            <person name="Swoboda P."/>
            <person name="Sykes S.M."/>
            <person name="Vaughn M."/>
            <person name="Vengrova S."/>
            <person name="Yoder R."/>
            <person name="Zeng Q."/>
            <person name="Allshire R."/>
            <person name="Baulcombe D."/>
            <person name="Birren B.W."/>
            <person name="Brown W."/>
            <person name="Ekwall K."/>
            <person name="Kellis M."/>
            <person name="Leatherwood J."/>
            <person name="Levin H."/>
            <person name="Margalit H."/>
            <person name="Martienssen R."/>
            <person name="Nieduszynski C.A."/>
            <person name="Spatafora J.W."/>
            <person name="Friedman N."/>
            <person name="Dalgaard J.Z."/>
            <person name="Baumann P."/>
            <person name="Niki H."/>
            <person name="Regev A."/>
            <person name="Nusbaum C."/>
        </authorList>
    </citation>
    <scope>NUCLEOTIDE SEQUENCE [LARGE SCALE GENOMIC DNA]</scope>
    <source>
        <strain>yFS275 / FY16936</strain>
    </source>
</reference>
<evidence type="ECO:0000255" key="1">
    <source>
        <dbReference type="HAMAP-Rule" id="MF_03143"/>
    </source>
</evidence>